<dbReference type="EC" id="4.2.1.59" evidence="1"/>
<dbReference type="EMBL" id="CP000647">
    <property type="protein sequence ID" value="ABR75653.1"/>
    <property type="molecule type" value="Genomic_DNA"/>
</dbReference>
<dbReference type="RefSeq" id="WP_004145858.1">
    <property type="nucleotide sequence ID" value="NC_009648.1"/>
</dbReference>
<dbReference type="SMR" id="A6T4Y2"/>
<dbReference type="STRING" id="272620.KPN_00193"/>
<dbReference type="jPOST" id="A6T4Y2"/>
<dbReference type="PaxDb" id="272620-KPN_00193"/>
<dbReference type="EnsemblBacteria" id="ABR75653">
    <property type="protein sequence ID" value="ABR75653"/>
    <property type="gene ID" value="KPN_00193"/>
</dbReference>
<dbReference type="GeneID" id="98391716"/>
<dbReference type="KEGG" id="kpn:KPN_00193"/>
<dbReference type="HOGENOM" id="CLU_078912_1_0_6"/>
<dbReference type="Proteomes" id="UP000000265">
    <property type="component" value="Chromosome"/>
</dbReference>
<dbReference type="GO" id="GO:0005737">
    <property type="term" value="C:cytoplasm"/>
    <property type="evidence" value="ECO:0007669"/>
    <property type="project" value="UniProtKB-SubCell"/>
</dbReference>
<dbReference type="GO" id="GO:0016020">
    <property type="term" value="C:membrane"/>
    <property type="evidence" value="ECO:0007669"/>
    <property type="project" value="GOC"/>
</dbReference>
<dbReference type="GO" id="GO:0019171">
    <property type="term" value="F:(3R)-hydroxyacyl-[acyl-carrier-protein] dehydratase activity"/>
    <property type="evidence" value="ECO:0007669"/>
    <property type="project" value="UniProtKB-EC"/>
</dbReference>
<dbReference type="GO" id="GO:0006633">
    <property type="term" value="P:fatty acid biosynthetic process"/>
    <property type="evidence" value="ECO:0007669"/>
    <property type="project" value="UniProtKB-UniRule"/>
</dbReference>
<dbReference type="GO" id="GO:0009245">
    <property type="term" value="P:lipid A biosynthetic process"/>
    <property type="evidence" value="ECO:0007669"/>
    <property type="project" value="UniProtKB-UniRule"/>
</dbReference>
<dbReference type="CDD" id="cd01288">
    <property type="entry name" value="FabZ"/>
    <property type="match status" value="1"/>
</dbReference>
<dbReference type="FunFam" id="3.10.129.10:FF:000001">
    <property type="entry name" value="3-hydroxyacyl-[acyl-carrier-protein] dehydratase FabZ"/>
    <property type="match status" value="1"/>
</dbReference>
<dbReference type="Gene3D" id="3.10.129.10">
    <property type="entry name" value="Hotdog Thioesterase"/>
    <property type="match status" value="1"/>
</dbReference>
<dbReference type="HAMAP" id="MF_00406">
    <property type="entry name" value="FabZ"/>
    <property type="match status" value="1"/>
</dbReference>
<dbReference type="InterPro" id="IPR013114">
    <property type="entry name" value="FabA_FabZ"/>
</dbReference>
<dbReference type="InterPro" id="IPR010084">
    <property type="entry name" value="FabZ"/>
</dbReference>
<dbReference type="InterPro" id="IPR029069">
    <property type="entry name" value="HotDog_dom_sf"/>
</dbReference>
<dbReference type="NCBIfam" id="TIGR01750">
    <property type="entry name" value="fabZ"/>
    <property type="match status" value="1"/>
</dbReference>
<dbReference type="NCBIfam" id="NF000582">
    <property type="entry name" value="PRK00006.1"/>
    <property type="match status" value="1"/>
</dbReference>
<dbReference type="PANTHER" id="PTHR30272">
    <property type="entry name" value="3-HYDROXYACYL-[ACYL-CARRIER-PROTEIN] DEHYDRATASE"/>
    <property type="match status" value="1"/>
</dbReference>
<dbReference type="PANTHER" id="PTHR30272:SF1">
    <property type="entry name" value="3-HYDROXYACYL-[ACYL-CARRIER-PROTEIN] DEHYDRATASE"/>
    <property type="match status" value="1"/>
</dbReference>
<dbReference type="Pfam" id="PF07977">
    <property type="entry name" value="FabA"/>
    <property type="match status" value="1"/>
</dbReference>
<dbReference type="SUPFAM" id="SSF54637">
    <property type="entry name" value="Thioesterase/thiol ester dehydrase-isomerase"/>
    <property type="match status" value="1"/>
</dbReference>
<comment type="function">
    <text evidence="1">Involved in unsaturated fatty acids biosynthesis. Catalyzes the dehydration of short chain beta-hydroxyacyl-ACPs and long chain saturated and unsaturated beta-hydroxyacyl-ACPs.</text>
</comment>
<comment type="catalytic activity">
    <reaction evidence="1">
        <text>a (3R)-hydroxyacyl-[ACP] = a (2E)-enoyl-[ACP] + H2O</text>
        <dbReference type="Rhea" id="RHEA:13097"/>
        <dbReference type="Rhea" id="RHEA-COMP:9925"/>
        <dbReference type="Rhea" id="RHEA-COMP:9945"/>
        <dbReference type="ChEBI" id="CHEBI:15377"/>
        <dbReference type="ChEBI" id="CHEBI:78784"/>
        <dbReference type="ChEBI" id="CHEBI:78827"/>
        <dbReference type="EC" id="4.2.1.59"/>
    </reaction>
</comment>
<comment type="subcellular location">
    <subcellularLocation>
        <location evidence="1">Cytoplasm</location>
    </subcellularLocation>
</comment>
<comment type="similarity">
    <text evidence="1">Belongs to the thioester dehydratase family. FabZ subfamily.</text>
</comment>
<protein>
    <recommendedName>
        <fullName evidence="1">3-hydroxyacyl-[acyl-carrier-protein] dehydratase FabZ</fullName>
        <ecNumber evidence="1">4.2.1.59</ecNumber>
    </recommendedName>
    <alternativeName>
        <fullName evidence="1">(3R)-hydroxymyristoyl-[acyl-carrier-protein] dehydratase</fullName>
        <shortName evidence="1">(3R)-hydroxymyristoyl-ACP dehydrase</shortName>
    </alternativeName>
    <alternativeName>
        <fullName evidence="1">Beta-hydroxyacyl-ACP dehydratase</fullName>
    </alternativeName>
</protein>
<feature type="chain" id="PRO_1000049848" description="3-hydroxyacyl-[acyl-carrier-protein] dehydratase FabZ">
    <location>
        <begin position="1"/>
        <end position="151"/>
    </location>
</feature>
<feature type="active site" evidence="1">
    <location>
        <position position="54"/>
    </location>
</feature>
<accession>A6T4Y2</accession>
<evidence type="ECO:0000255" key="1">
    <source>
        <dbReference type="HAMAP-Rule" id="MF_00406"/>
    </source>
</evidence>
<name>FABZ_KLEP7</name>
<organism>
    <name type="scientific">Klebsiella pneumoniae subsp. pneumoniae (strain ATCC 700721 / MGH 78578)</name>
    <dbReference type="NCBI Taxonomy" id="272620"/>
    <lineage>
        <taxon>Bacteria</taxon>
        <taxon>Pseudomonadati</taxon>
        <taxon>Pseudomonadota</taxon>
        <taxon>Gammaproteobacteria</taxon>
        <taxon>Enterobacterales</taxon>
        <taxon>Enterobacteriaceae</taxon>
        <taxon>Klebsiella/Raoultella group</taxon>
        <taxon>Klebsiella</taxon>
        <taxon>Klebsiella pneumoniae complex</taxon>
    </lineage>
</organism>
<reference key="1">
    <citation type="submission" date="2006-09" db="EMBL/GenBank/DDBJ databases">
        <authorList>
            <consortium name="The Klebsiella pneumonia Genome Sequencing Project"/>
            <person name="McClelland M."/>
            <person name="Sanderson E.K."/>
            <person name="Spieth J."/>
            <person name="Clifton W.S."/>
            <person name="Latreille P."/>
            <person name="Sabo A."/>
            <person name="Pepin K."/>
            <person name="Bhonagiri V."/>
            <person name="Porwollik S."/>
            <person name="Ali J."/>
            <person name="Wilson R.K."/>
        </authorList>
    </citation>
    <scope>NUCLEOTIDE SEQUENCE [LARGE SCALE GENOMIC DNA]</scope>
    <source>
        <strain>ATCC 700721 / MGH 78578</strain>
    </source>
</reference>
<gene>
    <name evidence="1" type="primary">fabZ</name>
    <name type="ordered locus">KPN78578_01920</name>
    <name type="ORF">KPN_00193</name>
</gene>
<proteinExistence type="inferred from homology"/>
<sequence length="151" mass="17025">MTTDTHTLHIEEILELLPHRYPFLLVDRVLDFEEGRFLRAVKNVSVNEPFFQGHFPGKPILPGVLILEAMAQATGILAFKSVGKLEPGELYYFAGIDEARFKRPVVPGDQMIMEVTFEKTRRGLTRFKGVALVDGKVVCEATMMCARSREA</sequence>
<keyword id="KW-0963">Cytoplasm</keyword>
<keyword id="KW-0441">Lipid A biosynthesis</keyword>
<keyword id="KW-0444">Lipid biosynthesis</keyword>
<keyword id="KW-0443">Lipid metabolism</keyword>
<keyword id="KW-0456">Lyase</keyword>